<dbReference type="EC" id="7.6.2.10" evidence="1"/>
<dbReference type="EMBL" id="CP000133">
    <property type="protein sequence ID" value="ABC91523.1"/>
    <property type="molecule type" value="Genomic_DNA"/>
</dbReference>
<dbReference type="RefSeq" id="WP_011426000.1">
    <property type="nucleotide sequence ID" value="NC_007761.1"/>
</dbReference>
<dbReference type="SMR" id="Q2K6L3"/>
<dbReference type="KEGG" id="ret:RHE_CH02753"/>
<dbReference type="eggNOG" id="COG3842">
    <property type="taxonomic scope" value="Bacteria"/>
</dbReference>
<dbReference type="HOGENOM" id="CLU_000604_1_1_5"/>
<dbReference type="OrthoDB" id="394852at2"/>
<dbReference type="Proteomes" id="UP000001936">
    <property type="component" value="Chromosome"/>
</dbReference>
<dbReference type="GO" id="GO:0055052">
    <property type="term" value="C:ATP-binding cassette (ABC) transporter complex, substrate-binding subunit-containing"/>
    <property type="evidence" value="ECO:0007669"/>
    <property type="project" value="TreeGrafter"/>
</dbReference>
<dbReference type="GO" id="GO:0015430">
    <property type="term" value="F:ABC-type glycerol-3-phosphate transporter activity"/>
    <property type="evidence" value="ECO:0007669"/>
    <property type="project" value="UniProtKB-EC"/>
</dbReference>
<dbReference type="GO" id="GO:0005524">
    <property type="term" value="F:ATP binding"/>
    <property type="evidence" value="ECO:0007669"/>
    <property type="project" value="UniProtKB-KW"/>
</dbReference>
<dbReference type="GO" id="GO:0016887">
    <property type="term" value="F:ATP hydrolysis activity"/>
    <property type="evidence" value="ECO:0007669"/>
    <property type="project" value="InterPro"/>
</dbReference>
<dbReference type="GO" id="GO:0008643">
    <property type="term" value="P:carbohydrate transport"/>
    <property type="evidence" value="ECO:0007669"/>
    <property type="project" value="InterPro"/>
</dbReference>
<dbReference type="GO" id="GO:0001407">
    <property type="term" value="P:glycerophosphodiester transmembrane transport"/>
    <property type="evidence" value="ECO:0007669"/>
    <property type="project" value="TreeGrafter"/>
</dbReference>
<dbReference type="CDD" id="cd03301">
    <property type="entry name" value="ABC_MalK_N"/>
    <property type="match status" value="1"/>
</dbReference>
<dbReference type="FunFam" id="3.40.50.300:FF:000042">
    <property type="entry name" value="Maltose/maltodextrin ABC transporter, ATP-binding protein"/>
    <property type="match status" value="1"/>
</dbReference>
<dbReference type="Gene3D" id="2.40.50.100">
    <property type="match status" value="1"/>
</dbReference>
<dbReference type="Gene3D" id="2.40.50.140">
    <property type="entry name" value="Nucleic acid-binding proteins"/>
    <property type="match status" value="1"/>
</dbReference>
<dbReference type="Gene3D" id="3.40.50.300">
    <property type="entry name" value="P-loop containing nucleotide triphosphate hydrolases"/>
    <property type="match status" value="1"/>
</dbReference>
<dbReference type="InterPro" id="IPR003593">
    <property type="entry name" value="AAA+_ATPase"/>
</dbReference>
<dbReference type="InterPro" id="IPR003439">
    <property type="entry name" value="ABC_transporter-like_ATP-bd"/>
</dbReference>
<dbReference type="InterPro" id="IPR017871">
    <property type="entry name" value="ABC_transporter-like_CS"/>
</dbReference>
<dbReference type="InterPro" id="IPR015855">
    <property type="entry name" value="ABC_transpr_MalK-like"/>
</dbReference>
<dbReference type="InterPro" id="IPR047641">
    <property type="entry name" value="ABC_transpr_MalK/UgpC-like"/>
</dbReference>
<dbReference type="InterPro" id="IPR008995">
    <property type="entry name" value="Mo/tungstate-bd_C_term_dom"/>
</dbReference>
<dbReference type="InterPro" id="IPR012340">
    <property type="entry name" value="NA-bd_OB-fold"/>
</dbReference>
<dbReference type="InterPro" id="IPR027417">
    <property type="entry name" value="P-loop_NTPase"/>
</dbReference>
<dbReference type="InterPro" id="IPR013611">
    <property type="entry name" value="Transp-assoc_OB_typ2"/>
</dbReference>
<dbReference type="NCBIfam" id="NF008653">
    <property type="entry name" value="PRK11650.1"/>
    <property type="match status" value="1"/>
</dbReference>
<dbReference type="PANTHER" id="PTHR43875">
    <property type="entry name" value="MALTODEXTRIN IMPORT ATP-BINDING PROTEIN MSMX"/>
    <property type="match status" value="1"/>
</dbReference>
<dbReference type="PANTHER" id="PTHR43875:SF12">
    <property type="entry name" value="SN-GLYCEROL-3-PHOSPHATE IMPORT ATP-BINDING PROTEIN UGPC"/>
    <property type="match status" value="1"/>
</dbReference>
<dbReference type="Pfam" id="PF00005">
    <property type="entry name" value="ABC_tran"/>
    <property type="match status" value="1"/>
</dbReference>
<dbReference type="Pfam" id="PF08402">
    <property type="entry name" value="TOBE_2"/>
    <property type="match status" value="1"/>
</dbReference>
<dbReference type="SMART" id="SM00382">
    <property type="entry name" value="AAA"/>
    <property type="match status" value="1"/>
</dbReference>
<dbReference type="SUPFAM" id="SSF50331">
    <property type="entry name" value="MOP-like"/>
    <property type="match status" value="1"/>
</dbReference>
<dbReference type="SUPFAM" id="SSF52540">
    <property type="entry name" value="P-loop containing nucleoside triphosphate hydrolases"/>
    <property type="match status" value="1"/>
</dbReference>
<dbReference type="PROSITE" id="PS00211">
    <property type="entry name" value="ABC_TRANSPORTER_1"/>
    <property type="match status" value="1"/>
</dbReference>
<dbReference type="PROSITE" id="PS50893">
    <property type="entry name" value="ABC_TRANSPORTER_2"/>
    <property type="match status" value="1"/>
</dbReference>
<dbReference type="PROSITE" id="PS51315">
    <property type="entry name" value="UGPC"/>
    <property type="match status" value="1"/>
</dbReference>
<comment type="function">
    <text evidence="1">Part of the ABC transporter complex UgpBAEC involved in sn-glycerol-3-phosphate (G3P) import. Responsible for energy coupling to the transport system.</text>
</comment>
<comment type="catalytic activity">
    <reaction evidence="1">
        <text>sn-glycerol 3-phosphate(out) + ATP + H2O = sn-glycerol 3-phosphate(in) + ADP + phosphate + H(+)</text>
        <dbReference type="Rhea" id="RHEA:21668"/>
        <dbReference type="ChEBI" id="CHEBI:15377"/>
        <dbReference type="ChEBI" id="CHEBI:15378"/>
        <dbReference type="ChEBI" id="CHEBI:30616"/>
        <dbReference type="ChEBI" id="CHEBI:43474"/>
        <dbReference type="ChEBI" id="CHEBI:57597"/>
        <dbReference type="ChEBI" id="CHEBI:456216"/>
        <dbReference type="EC" id="7.6.2.10"/>
    </reaction>
</comment>
<comment type="subunit">
    <text evidence="1">The complex is composed of two ATP-binding proteins (UgpC), two transmembrane proteins (UgpA and UgpE) and a solute-binding protein (UgpB).</text>
</comment>
<comment type="subcellular location">
    <subcellularLocation>
        <location evidence="1">Cell inner membrane</location>
        <topology evidence="1">Peripheral membrane protein</topology>
    </subcellularLocation>
</comment>
<comment type="similarity">
    <text evidence="1">Belongs to the ABC transporter superfamily. sn-glycerol-3-phosphate importer (TC 3.A.1.1.3) family.</text>
</comment>
<feature type="chain" id="PRO_0000289762" description="sn-glycerol-3-phosphate import ATP-binding protein UgpC 1">
    <location>
        <begin position="1"/>
        <end position="347"/>
    </location>
</feature>
<feature type="domain" description="ABC transporter" evidence="1">
    <location>
        <begin position="4"/>
        <end position="234"/>
    </location>
</feature>
<feature type="binding site" evidence="1">
    <location>
        <begin position="36"/>
        <end position="43"/>
    </location>
    <ligand>
        <name>ATP</name>
        <dbReference type="ChEBI" id="CHEBI:30616"/>
    </ligand>
</feature>
<name>UGPC1_RHIEC</name>
<keyword id="KW-0067">ATP-binding</keyword>
<keyword id="KW-0997">Cell inner membrane</keyword>
<keyword id="KW-1003">Cell membrane</keyword>
<keyword id="KW-0472">Membrane</keyword>
<keyword id="KW-0547">Nucleotide-binding</keyword>
<keyword id="KW-1185">Reference proteome</keyword>
<keyword id="KW-0762">Sugar transport</keyword>
<keyword id="KW-1278">Translocase</keyword>
<keyword id="KW-0813">Transport</keyword>
<evidence type="ECO:0000255" key="1">
    <source>
        <dbReference type="HAMAP-Rule" id="MF_01727"/>
    </source>
</evidence>
<reference key="1">
    <citation type="journal article" date="2006" name="Proc. Natl. Acad. Sci. U.S.A.">
        <title>The partitioned Rhizobium etli genome: genetic and metabolic redundancy in seven interacting replicons.</title>
        <authorList>
            <person name="Gonzalez V."/>
            <person name="Santamaria R.I."/>
            <person name="Bustos P."/>
            <person name="Hernandez-Gonzalez I."/>
            <person name="Medrano-Soto A."/>
            <person name="Moreno-Hagelsieb G."/>
            <person name="Janga S.C."/>
            <person name="Ramirez M.A."/>
            <person name="Jimenez-Jacinto V."/>
            <person name="Collado-Vides J."/>
            <person name="Davila G."/>
        </authorList>
    </citation>
    <scope>NUCLEOTIDE SEQUENCE [LARGE SCALE GENOMIC DNA]</scope>
    <source>
        <strain>ATCC 51251 / DSM 11541 / JCM 21823 / NBRC 15573 / CFN 42</strain>
    </source>
</reference>
<protein>
    <recommendedName>
        <fullName evidence="1">sn-glycerol-3-phosphate import ATP-binding protein UgpC 1</fullName>
        <ecNumber evidence="1">7.6.2.10</ecNumber>
    </recommendedName>
</protein>
<accession>Q2K6L3</accession>
<sequence length="347" mass="38846">MAAIELIDLKKNYGPVPAVKGINLTVADGEMIVLVGPSGCGKSTLLRMIAGLEVISSGHLRISGNDVGHVDPADRNIAMVFQNYALYPHMTVRQNLEYGLKNRRVPRHEINRRIADAADILEIGEFLERRPRQLSGGQRQRVAMGRAIVRDPAAFLFDEPLSNLDAKLRVRMRVEIRRLQRQLKTTSLYVTHDQLEAMTLADRLVVMNGGRIEQIGTPVEVYRRPETVFVAGFIGSPPMNLIDLDELGPSDRAFPRDTDLVGIRPGAINLGAGSAHDLRFDAHVELIETVGDENNVHLRIDDSRKRIIASVPTDRHLRESDRISCHVRMEALHPFNKSTGRRTDRSR</sequence>
<organism>
    <name type="scientific">Rhizobium etli (strain ATCC 51251 / DSM 11541 / JCM 21823 / NBRC 15573 / CFN 42)</name>
    <dbReference type="NCBI Taxonomy" id="347834"/>
    <lineage>
        <taxon>Bacteria</taxon>
        <taxon>Pseudomonadati</taxon>
        <taxon>Pseudomonadota</taxon>
        <taxon>Alphaproteobacteria</taxon>
        <taxon>Hyphomicrobiales</taxon>
        <taxon>Rhizobiaceae</taxon>
        <taxon>Rhizobium/Agrobacterium group</taxon>
        <taxon>Rhizobium</taxon>
    </lineage>
</organism>
<gene>
    <name evidence="1" type="primary">ugpC1</name>
    <name type="ordered locus">RHE_CH02753</name>
</gene>
<proteinExistence type="inferred from homology"/>